<sequence length="420" mass="45042">MTEAAAQPHALPADAPDIAPERDLLSKFDGLIAERQKLLDSGVTDPFAIVMEQVKSPTEAVIRGKDTILLGTYNYMGMTFDPDVIAAGKEALEKFGSGTNGSRMLNGTFHDHMEVEQALRDFYGTTGAIVFSTGYMANLGIISTLAGKGEYVILDADSHASIYDGCQQGNAEIVRFRHNSVEDLDKRLGRLPKEPAKLVVLEGVYSMLGDIAPLKEMVAVAKKHGAMVLVDEAHSMGFFGPNGRGVYEAQGLEGQIDFVVGTFSKSVGTVGGFVVSNHPKFEAVRLACRPYIFTASLPPSVVATATTSIRKLMTAHEKRERLWSNARALHGGLKAMGFRLGTETCDSAIVAVMLEDQEQAAMMWQALLDGGLYVNMARPPATPAGTFLLRCSICAEHTPAQIQTVLGMFQAAGRAVGVIG</sequence>
<keyword id="KW-0002">3D-structure</keyword>
<keyword id="KW-0012">Acyltransferase</keyword>
<keyword id="KW-0963">Cytoplasm</keyword>
<keyword id="KW-0903">Direct protein sequencing</keyword>
<keyword id="KW-0443">Lipid metabolism</keyword>
<keyword id="KW-0663">Pyridoxal phosphate</keyword>
<keyword id="KW-0808">Transferase</keyword>
<dbReference type="EC" id="2.3.1.50" evidence="1 2 3 4"/>
<dbReference type="EMBL" id="AB055142">
    <property type="protein sequence ID" value="BAB56013.1"/>
    <property type="molecule type" value="Genomic_DNA"/>
</dbReference>
<dbReference type="EMBL" id="JABEOU010000017">
    <property type="protein sequence ID" value="NNG56642.1"/>
    <property type="molecule type" value="Genomic_DNA"/>
</dbReference>
<dbReference type="EMBL" id="CP065713">
    <property type="protein sequence ID" value="QPT08440.1"/>
    <property type="molecule type" value="Genomic_DNA"/>
</dbReference>
<dbReference type="RefSeq" id="WP_007405449.1">
    <property type="nucleotide sequence ID" value="NZ_LDUA01000007.1"/>
</dbReference>
<dbReference type="PDB" id="2JG2">
    <property type="method" value="X-ray"/>
    <property type="resolution" value="1.30 A"/>
    <property type="chains" value="A=1-420"/>
</dbReference>
<dbReference type="PDB" id="2JGT">
    <property type="method" value="X-ray"/>
    <property type="resolution" value="3.00 A"/>
    <property type="chains" value="A/B=1-420"/>
</dbReference>
<dbReference type="PDB" id="2W8J">
    <property type="method" value="X-ray"/>
    <property type="resolution" value="1.50 A"/>
    <property type="chains" value="A=2-420"/>
</dbReference>
<dbReference type="PDB" id="2W8T">
    <property type="method" value="X-ray"/>
    <property type="resolution" value="1.25 A"/>
    <property type="chains" value="A=2-420"/>
</dbReference>
<dbReference type="PDB" id="2W8U">
    <property type="method" value="X-ray"/>
    <property type="resolution" value="1.50 A"/>
    <property type="chains" value="A=2-420"/>
</dbReference>
<dbReference type="PDB" id="2W8V">
    <property type="method" value="X-ray"/>
    <property type="resolution" value="1.43 A"/>
    <property type="chains" value="A=2-420"/>
</dbReference>
<dbReference type="PDB" id="2W8W">
    <property type="method" value="X-ray"/>
    <property type="resolution" value="2.14 A"/>
    <property type="chains" value="A=2-420"/>
</dbReference>
<dbReference type="PDB" id="2XBN">
    <property type="method" value="X-ray"/>
    <property type="resolution" value="1.40 A"/>
    <property type="chains" value="A=2-420"/>
</dbReference>
<dbReference type="PDB" id="4BMK">
    <property type="method" value="X-ray"/>
    <property type="resolution" value="1.62 A"/>
    <property type="chains" value="A/B=2-420"/>
</dbReference>
<dbReference type="PDBsum" id="2JG2"/>
<dbReference type="PDBsum" id="2JGT"/>
<dbReference type="PDBsum" id="2W8J"/>
<dbReference type="PDBsum" id="2W8T"/>
<dbReference type="PDBsum" id="2W8U"/>
<dbReference type="PDBsum" id="2W8V"/>
<dbReference type="PDBsum" id="2W8W"/>
<dbReference type="PDBsum" id="2XBN"/>
<dbReference type="PDBsum" id="4BMK"/>
<dbReference type="SMR" id="Q93UV0"/>
<dbReference type="ChEMBL" id="CHEMBL3217400"/>
<dbReference type="GeneID" id="78526496"/>
<dbReference type="OrthoDB" id="9807157at2"/>
<dbReference type="BRENDA" id="2.3.1.50">
    <property type="organism ID" value="2280"/>
</dbReference>
<dbReference type="UniPathway" id="UPA00222"/>
<dbReference type="EvolutionaryTrace" id="Q93UV0"/>
<dbReference type="PRO" id="PR:Q93UV0"/>
<dbReference type="Proteomes" id="UP000550136">
    <property type="component" value="Unassembled WGS sequence"/>
</dbReference>
<dbReference type="Proteomes" id="UP000594836">
    <property type="component" value="Chromosome"/>
</dbReference>
<dbReference type="GO" id="GO:0005737">
    <property type="term" value="C:cytoplasm"/>
    <property type="evidence" value="ECO:0007669"/>
    <property type="project" value="UniProtKB-SubCell"/>
</dbReference>
<dbReference type="GO" id="GO:0016020">
    <property type="term" value="C:membrane"/>
    <property type="evidence" value="ECO:0007669"/>
    <property type="project" value="GOC"/>
</dbReference>
<dbReference type="GO" id="GO:0016746">
    <property type="term" value="F:acyltransferase activity"/>
    <property type="evidence" value="ECO:0007669"/>
    <property type="project" value="UniProtKB-KW"/>
</dbReference>
<dbReference type="GO" id="GO:0030170">
    <property type="term" value="F:pyridoxal phosphate binding"/>
    <property type="evidence" value="ECO:0007669"/>
    <property type="project" value="InterPro"/>
</dbReference>
<dbReference type="GO" id="GO:0009058">
    <property type="term" value="P:biosynthetic process"/>
    <property type="evidence" value="ECO:0007669"/>
    <property type="project" value="InterPro"/>
</dbReference>
<dbReference type="GO" id="GO:0006665">
    <property type="term" value="P:sphingolipid metabolic process"/>
    <property type="evidence" value="ECO:0007669"/>
    <property type="project" value="UniProtKB-UniPathway"/>
</dbReference>
<dbReference type="CDD" id="cd06454">
    <property type="entry name" value="KBL_like"/>
    <property type="match status" value="1"/>
</dbReference>
<dbReference type="Gene3D" id="3.90.1150.10">
    <property type="entry name" value="Aspartate Aminotransferase, domain 1"/>
    <property type="match status" value="1"/>
</dbReference>
<dbReference type="Gene3D" id="3.40.640.10">
    <property type="entry name" value="Type I PLP-dependent aspartate aminotransferase-like (Major domain)"/>
    <property type="match status" value="1"/>
</dbReference>
<dbReference type="InterPro" id="IPR001917">
    <property type="entry name" value="Aminotrans_II_pyridoxalP_BS"/>
</dbReference>
<dbReference type="InterPro" id="IPR004839">
    <property type="entry name" value="Aminotransferase_I/II_large"/>
</dbReference>
<dbReference type="InterPro" id="IPR050087">
    <property type="entry name" value="AON_synthase_class-II"/>
</dbReference>
<dbReference type="InterPro" id="IPR015424">
    <property type="entry name" value="PyrdxlP-dep_Trfase"/>
</dbReference>
<dbReference type="InterPro" id="IPR015421">
    <property type="entry name" value="PyrdxlP-dep_Trfase_major"/>
</dbReference>
<dbReference type="InterPro" id="IPR015422">
    <property type="entry name" value="PyrdxlP-dep_Trfase_small"/>
</dbReference>
<dbReference type="NCBIfam" id="NF047603">
    <property type="entry name" value="SerpalmtaseAlphaP"/>
    <property type="match status" value="1"/>
</dbReference>
<dbReference type="NCBIfam" id="NF047599">
    <property type="entry name" value="SerpalmtaseBetaP"/>
    <property type="match status" value="1"/>
</dbReference>
<dbReference type="PANTHER" id="PTHR13693">
    <property type="entry name" value="CLASS II AMINOTRANSFERASE/8-AMINO-7-OXONONANOATE SYNTHASE"/>
    <property type="match status" value="1"/>
</dbReference>
<dbReference type="PANTHER" id="PTHR13693:SF3">
    <property type="entry name" value="LD36009P"/>
    <property type="match status" value="1"/>
</dbReference>
<dbReference type="Pfam" id="PF00155">
    <property type="entry name" value="Aminotran_1_2"/>
    <property type="match status" value="1"/>
</dbReference>
<dbReference type="SUPFAM" id="SSF53383">
    <property type="entry name" value="PLP-dependent transferases"/>
    <property type="match status" value="1"/>
</dbReference>
<dbReference type="PROSITE" id="PS00599">
    <property type="entry name" value="AA_TRANSFER_CLASS_2"/>
    <property type="match status" value="1"/>
</dbReference>
<comment type="function">
    <text evidence="1 2 3 4">Catalyzes the condensation of L-serine with palmitoyl-CoA (hexadecanoyl-CoA) to produce 3-oxosphinganine (PubMed:11279212, PubMed:17557831, PubMed:17559874, PubMed:19376777). Exhibits a broad substrate specificity concerning the chain length and the degree of unsaturation of acyl-CoA (PubMed:11279212, PubMed:19376777).</text>
</comment>
<comment type="catalytic activity">
    <reaction evidence="1 2 3 4">
        <text>L-serine + hexadecanoyl-CoA + H(+) = 3-oxosphinganine + CO2 + CoA</text>
        <dbReference type="Rhea" id="RHEA:14761"/>
        <dbReference type="ChEBI" id="CHEBI:15378"/>
        <dbReference type="ChEBI" id="CHEBI:16526"/>
        <dbReference type="ChEBI" id="CHEBI:33384"/>
        <dbReference type="ChEBI" id="CHEBI:57287"/>
        <dbReference type="ChEBI" id="CHEBI:57379"/>
        <dbReference type="ChEBI" id="CHEBI:58299"/>
        <dbReference type="EC" id="2.3.1.50"/>
    </reaction>
    <physiologicalReaction direction="left-to-right" evidence="1">
        <dbReference type="Rhea" id="RHEA:14762"/>
    </physiologicalReaction>
</comment>
<comment type="cofactor">
    <cofactor evidence="1 3 4">
        <name>pyridoxal 5'-phosphate</name>
        <dbReference type="ChEBI" id="CHEBI:597326"/>
    </cofactor>
</comment>
<comment type="activity regulation">
    <text evidence="1 5 6">Not inhibited by relatively high concentrations of palmitoyl-CoA (PubMed:11279212). Inhibited by both D-cycloserine (DCS) and L-cycloserine (LCS), which inactivate SPT by transamination to form a free pyridoxamine 5'-phosphate (PMP) and beta-aminooxyacetaldehyde that remain bound at the active site (PubMed:20445930). Inhibition is reversed by incubation with excess pyridoxal phosphate (PubMed:20445930). Inhibited by the fungal natural product myriocin, which acts as a competitive inhibitor for both L-serine and palmitoyl-CoA substrates (PubMed:23957439).</text>
</comment>
<comment type="biophysicochemical properties">
    <kinetics>
        <KM evidence="1">4.23 mM for L-serine</KM>
        <KM evidence="2">4.7 mM for L-serine</KM>
        <KM evidence="4">1.4 mM for L-serine</KM>
        <KM evidence="1">0.87 mM for palmitoyl-CoA</KM>
        <KM evidence="2">0.69 mM for palmitoyl-CoA</KM>
        <KM evidence="4">35.4 uM for palmitoyl-CoA</KM>
        <KM evidence="4">2324.9 uM for decanoyl-CoA</KM>
        <KM evidence="4">822.2 uM for lauroyl-CoA</KM>
        <KM evidence="4">97.1 uM for myristoyl-CoA</KM>
        <KM evidence="4">13.7 uM for stearoyl-CoA</KM>
        <text evidence="1 2 4">kcat is 140 min(-1) with palmitoyl-CoA as substrate (PubMed:11279212). kcat is 2.3 sec(-1) with palmitoyl-CoA as substrate (PubMed:17557831). kcat is 1.150 sec(-1) with palmitoyl-CoA as substrate (PubMed:19376777). kcat is 0.045 sec(-1) with decanoyl-CoA as substrate (PubMed:19376777). kcat is 0.262 sec(-1) with lauroyl-CoA as substrate (PubMed:19376777). kcat is 0.601 sec(-1) with myristoyl-CoA as substrate (PubMed:19376777). kcat is 0.898 sec(-1) with stearoyl-CoA as substrate (PubMed:19376777). kcat is 0.327 sec(-1) with arachidoyl-CoA as substrate (PubMed:19376777).</text>
    </kinetics>
    <phDependence>
        <text evidence="1">Optimum pH is 7.5 to 8.0.</text>
    </phDependence>
</comment>
<comment type="pathway">
    <text evidence="10 11">Lipid metabolism; sphingolipid metabolism.</text>
</comment>
<comment type="subunit">
    <text evidence="1 3 4">Homodimer.</text>
</comment>
<comment type="subcellular location">
    <subcellularLocation>
        <location evidence="2">Cytoplasm</location>
    </subcellularLocation>
    <text evidence="2">Distributed throughout the cytoplasm.</text>
</comment>
<comment type="similarity">
    <text evidence="9">Belongs to the class-II pyridoxal-phosphate-dependent aminotransferase family.</text>
</comment>
<evidence type="ECO:0000269" key="1">
    <source>
    </source>
</evidence>
<evidence type="ECO:0000269" key="2">
    <source>
    </source>
</evidence>
<evidence type="ECO:0000269" key="3">
    <source>
    </source>
</evidence>
<evidence type="ECO:0000269" key="4">
    <source>
    </source>
</evidence>
<evidence type="ECO:0000269" key="5">
    <source>
    </source>
</evidence>
<evidence type="ECO:0000269" key="6">
    <source>
    </source>
</evidence>
<evidence type="ECO:0000303" key="7">
    <source>
    </source>
</evidence>
<evidence type="ECO:0000303" key="8">
    <source>
    </source>
</evidence>
<evidence type="ECO:0000305" key="9"/>
<evidence type="ECO:0000305" key="10">
    <source>
    </source>
</evidence>
<evidence type="ECO:0000305" key="11">
    <source>
    </source>
</evidence>
<evidence type="ECO:0000312" key="12">
    <source>
        <dbReference type="EMBL" id="NNG56642.1"/>
    </source>
</evidence>
<evidence type="ECO:0000312" key="13">
    <source>
        <dbReference type="EMBL" id="QPT08440.1"/>
    </source>
</evidence>
<evidence type="ECO:0007744" key="14">
    <source>
        <dbReference type="PDB" id="2JG2"/>
    </source>
</evidence>
<evidence type="ECO:0007744" key="15">
    <source>
        <dbReference type="PDB" id="2JGT"/>
    </source>
</evidence>
<evidence type="ECO:0007744" key="16">
    <source>
        <dbReference type="PDB" id="2W8J"/>
    </source>
</evidence>
<evidence type="ECO:0007744" key="17">
    <source>
        <dbReference type="PDB" id="2W8T"/>
    </source>
</evidence>
<evidence type="ECO:0007744" key="18">
    <source>
        <dbReference type="PDB" id="2W8U"/>
    </source>
</evidence>
<evidence type="ECO:0007744" key="19">
    <source>
        <dbReference type="PDB" id="2W8V"/>
    </source>
</evidence>
<evidence type="ECO:0007744" key="20">
    <source>
        <dbReference type="PDB" id="2W8W"/>
    </source>
</evidence>
<evidence type="ECO:0007744" key="21">
    <source>
        <dbReference type="PDB" id="2XBN"/>
    </source>
</evidence>
<evidence type="ECO:0007744" key="22">
    <source>
        <dbReference type="PDB" id="4BMK"/>
    </source>
</evidence>
<evidence type="ECO:0007829" key="23">
    <source>
        <dbReference type="PDB" id="2W8T"/>
    </source>
</evidence>
<evidence type="ECO:0007829" key="24">
    <source>
        <dbReference type="PDB" id="2W8U"/>
    </source>
</evidence>
<evidence type="ECO:0007829" key="25">
    <source>
        <dbReference type="PDB" id="2W8V"/>
    </source>
</evidence>
<evidence type="ECO:0007829" key="26">
    <source>
        <dbReference type="PDB" id="2XBN"/>
    </source>
</evidence>
<reference key="1">
    <citation type="journal article" date="2001" name="J. Biol. Chem.">
        <title>A water-soluble homodimeric serine palmitoyltransferase from Sphingomonas paucimobilis EY2395T strain. Purification, characterization, cloning, and overproduction.</title>
        <authorList>
            <person name="Ikushiro H."/>
            <person name="Hayashi H."/>
            <person name="Kagamiyama H."/>
        </authorList>
    </citation>
    <scope>NUCLEOTIDE SEQUENCE [GENOMIC DNA]</scope>
    <scope>PROTEIN SEQUENCE OF 2-6</scope>
    <scope>FUNCTION</scope>
    <scope>CATALYTIC ACTIVITY</scope>
    <scope>COFACTOR</scope>
    <scope>ACTIVITY REGULATION</scope>
    <scope>BIOPHYSICOCHEMICAL PROPERTIES</scope>
    <scope>SUBUNIT</scope>
    <source>
        <strain>EY2395</strain>
    </source>
</reference>
<reference key="2">
    <citation type="submission" date="2020-05" db="EMBL/GenBank/DDBJ databases">
        <title>Draft Genome Sequences of Sphingomonas sp. Isolated from the International Space Station.</title>
        <authorList>
            <person name="Bijlani S."/>
            <person name="Singh N.K."/>
            <person name="Mason C.E."/>
            <person name="Wang C.C."/>
            <person name="Venkateswaran K."/>
        </authorList>
    </citation>
    <scope>NUCLEOTIDE SEQUENCE [LARGE SCALE GENOMIC DNA]</scope>
    <source>
        <strain>FKI-L5-BR-P1</strain>
    </source>
</reference>
<reference key="3">
    <citation type="submission" date="2020-12" db="EMBL/GenBank/DDBJ databases">
        <title>FDA dAtabase for Regulatory Grade micrObial Sequences (FDA-ARGOS): Supporting development and validation of Infectious Disease Dx tests.</title>
        <authorList>
            <person name="Sproer C."/>
            <person name="Gronow S."/>
            <person name="Severitt S."/>
            <person name="Schroder I."/>
            <person name="Tallon L."/>
            <person name="Sadzewicz L."/>
            <person name="Zhao X."/>
            <person name="Boylan J."/>
            <person name="Ott S."/>
            <person name="Bowen H."/>
            <person name="Vavikolanu K."/>
            <person name="Mehta A."/>
            <person name="Aluvathingal J."/>
            <person name="Nadendla S."/>
            <person name="Lowell S."/>
            <person name="Myers T."/>
            <person name="Yan Y."/>
            <person name="Sichtig H."/>
        </authorList>
    </citation>
    <scope>NUCLEOTIDE SEQUENCE [LARGE SCALE GENOMIC DNA]</scope>
    <source>
        <strain>ATCC 10829 / DSM 30198 / FDAARGOS_881</strain>
    </source>
</reference>
<reference key="4">
    <citation type="journal article" date="2007" name="J. Bacteriol.">
        <title>Molecular characterization of membrane-associated soluble serine palmitoyltransferases from Sphingobacterium multivorum and Bdellovibrio stolpii.</title>
        <authorList>
            <person name="Ikushiro H."/>
            <person name="Islam M.M."/>
            <person name="Tojo H."/>
            <person name="Hayashi H."/>
        </authorList>
    </citation>
    <scope>FUNCTION</scope>
    <scope>CATALYTIC ACTIVITY</scope>
    <scope>BIOPHYSICOCHEMICAL PROPERTIES</scope>
    <scope>SUBCELLULAR LOCATION</scope>
    <source>
        <strain>ATCC 27052</strain>
    </source>
</reference>
<reference evidence="14 15" key="5">
    <citation type="journal article" date="2007" name="J. Mol. Biol.">
        <title>The structure of serine palmitoyltransferase; gateway to sphingolipid biosynthesis.</title>
        <authorList>
            <person name="Yard B.A."/>
            <person name="Carter L.G."/>
            <person name="Johnson K.A."/>
            <person name="Overton I.M."/>
            <person name="Dorward M."/>
            <person name="Liu H."/>
            <person name="McMahon S.A."/>
            <person name="Oke M."/>
            <person name="Puech D."/>
            <person name="Barton G.J."/>
            <person name="Naismith J.H."/>
            <person name="Campopiano D.J."/>
        </authorList>
    </citation>
    <scope>X-RAY CRYSTALLOGRAPHY (1.30 ANGSTROMS) IN COMPLEX WITH PYRIDOXAL PHOSPHATE</scope>
    <scope>FUNCTION</scope>
    <scope>CATALYTIC ACTIVITY</scope>
    <scope>COFACTOR</scope>
    <scope>SUBUNIT</scope>
    <source>
        <strain>13361</strain>
    </source>
</reference>
<reference evidence="16 17 18 19 20" key="6">
    <citation type="journal article" date="2009" name="J. Biol. Chem.">
        <title>The external aldimine form of serine palmitoyltransferase: structural, kinetic, and spectroscopic analysis of the wild-type enzyme and HSAN1 mutant mimics.</title>
        <authorList>
            <person name="Raman M.C.C."/>
            <person name="Johnson K.A."/>
            <person name="Yard B.A."/>
            <person name="Lowther J."/>
            <person name="Carter L.G."/>
            <person name="Naismith J.H."/>
            <person name="Campopiano D.J."/>
        </authorList>
    </citation>
    <scope>X-RAY CRYSTALLOGRAPHY (1.25 ANGSTROMS) OF 2-420 OF WILD-TYPE AND MUTANTS IN COMPLEXES WITH PYRIDOXAL PHOSPHATE AND PLP-BOUND SERINE</scope>
    <scope>FUNCTION</scope>
    <scope>CATALYTIC ACTIVITY</scope>
    <scope>REACTION MECHANISM</scope>
    <scope>COFACTOR</scope>
    <scope>BIOPHYSICOCHEMICAL PROPERTIES</scope>
    <scope>SUBUNIT</scope>
    <scope>MUTAGENESIS OF ASN-100 AND ARG-378</scope>
    <source>
        <strain>EY2395</strain>
    </source>
</reference>
<reference evidence="21" key="7">
    <citation type="journal article" date="2010" name="Mol. Biosyst.">
        <title>Inhibition of the PLP-dependent enzyme serine palmitoyltransferase by cycloserine: evidence for a novel decarboxylative mechanism of inactivation.</title>
        <authorList>
            <person name="Lowther J."/>
            <person name="Yard B.A."/>
            <person name="Johnson K.A."/>
            <person name="Carter L.G."/>
            <person name="Bhat V.T."/>
            <person name="Raman M.C."/>
            <person name="Clarke D.J."/>
            <person name="Ramakers B."/>
            <person name="McMahon S.A."/>
            <person name="Naismith J.H."/>
            <person name="Campopiano D.J."/>
        </authorList>
    </citation>
    <scope>X-RAY CRYSTALLOGRAPHY (1.40 ANGSTROMS) OF 2-420 OF CYCLOSERINE-INACTIVATED SPT</scope>
    <scope>ACTIVITY REGULATION</scope>
</reference>
<reference evidence="22" key="8">
    <citation type="journal article" date="2013" name="J. Am. Chem. Soc.">
        <title>The chemical basis of serine palmitoyltransferase inhibition by myriocin.</title>
        <authorList>
            <person name="Wadsworth J.M."/>
            <person name="Clarke D.J."/>
            <person name="McMahon S.A."/>
            <person name="Lowther J.P."/>
            <person name="Beattie A.E."/>
            <person name="Langridge-Smith P.R."/>
            <person name="Broughton H.B."/>
            <person name="Dunn T.M."/>
            <person name="Naismith J.H."/>
            <person name="Campopiano D.J."/>
        </authorList>
    </citation>
    <scope>X-RAY CRYSTALLOGRAPHY (1.62 ANGSTROMS) OF 2-420 OF MUTANT ALA-265 IN COMPLEX WITH PLP-MYRIOCIN ALDIMINE</scope>
    <scope>ACTIVITY REGULATION</scope>
    <scope>MUTAGENESIS OF LYS-265</scope>
</reference>
<gene>
    <name evidence="8" type="primary">spt</name>
    <name evidence="7" type="synonym">SPT1</name>
    <name evidence="12" type="ORF">HKX06_04505</name>
    <name evidence="13" type="ORF">I6G38_17245</name>
</gene>
<organism>
    <name type="scientific">Sphingomonas paucimobilis</name>
    <name type="common">Pseudomonas paucimobilis</name>
    <dbReference type="NCBI Taxonomy" id="13689"/>
    <lineage>
        <taxon>Bacteria</taxon>
        <taxon>Pseudomonadati</taxon>
        <taxon>Pseudomonadota</taxon>
        <taxon>Alphaproteobacteria</taxon>
        <taxon>Sphingomonadales</taxon>
        <taxon>Sphingomonadaceae</taxon>
        <taxon>Sphingomonas</taxon>
    </lineage>
</organism>
<protein>
    <recommendedName>
        <fullName evidence="7">Serine palmitoyltransferase</fullName>
        <shortName evidence="7">SPT</shortName>
        <ecNumber evidence="1 2 3 4">2.3.1.50</ecNumber>
    </recommendedName>
</protein>
<feature type="initiator methionine" description="Removed" evidence="1">
    <location>
        <position position="1"/>
    </location>
</feature>
<feature type="chain" id="PRO_0000456080" description="Serine palmitoyltransferase">
    <location>
        <begin position="2"/>
        <end position="420"/>
    </location>
</feature>
<feature type="binding site" evidence="3 4 14 17 18 19">
    <location>
        <begin position="134"/>
        <end position="135"/>
    </location>
    <ligand>
        <name>pyridoxal 5'-phosphate</name>
        <dbReference type="ChEBI" id="CHEBI:597326"/>
    </ligand>
</feature>
<feature type="binding site" evidence="3 14">
    <location>
        <position position="234"/>
    </location>
    <ligand>
        <name>pyridoxal 5'-phosphate</name>
        <dbReference type="ChEBI" id="CHEBI:597326"/>
    </ligand>
</feature>
<feature type="binding site" evidence="3 4 14 17 18 19">
    <location>
        <position position="262"/>
    </location>
    <ligand>
        <name>pyridoxal 5'-phosphate</name>
        <dbReference type="ChEBI" id="CHEBI:597326"/>
    </ligand>
</feature>
<feature type="binding site" evidence="3 4 14 17 18 19">
    <location>
        <position position="264"/>
    </location>
    <ligand>
        <name>pyridoxal 5'-phosphate</name>
        <dbReference type="ChEBI" id="CHEBI:597326"/>
    </ligand>
</feature>
<feature type="modified residue" description="N6-(pyridoxal phosphate)lysine" evidence="3 4 14 17 18 19">
    <location>
        <position position="265"/>
    </location>
</feature>
<feature type="mutagenesis site" description="23-fold decrease in catalytic efficiency for L-serine." evidence="4">
    <original>N</original>
    <variation>C</variation>
    <location>
        <position position="100"/>
    </location>
</feature>
<feature type="mutagenesis site" description="147-fold decrease in catalytic efficiency for L-serine. Affects the chemistry of the pyridoxal phosphate." evidence="4">
    <original>N</original>
    <variation>W</variation>
    <location>
        <position position="100"/>
    </location>
</feature>
<feature type="mutagenesis site" description="410-fold decrease in catalytic efficiency for L-serine. Affects the chemistry of the pyridoxal phosphate. Is less able to stabilize a quinonoid intermediate." evidence="4">
    <original>N</original>
    <variation>Y</variation>
    <location>
        <position position="100"/>
    </location>
</feature>
<feature type="mutagenesis site" description="Loss of activity." evidence="6">
    <original>K</original>
    <variation>A</variation>
    <location>
        <position position="265"/>
    </location>
</feature>
<feature type="mutagenesis site" description="40-fold decrease in catalytic efficiency for L-serine. Is less able to stabilize a quinonoid intermediate." evidence="4">
    <original>R</original>
    <variation>A</variation>
    <location>
        <position position="378"/>
    </location>
</feature>
<feature type="mutagenesis site" description="60-fold decrease in catalytic efficiency for L-serine." evidence="4">
    <original>R</original>
    <variation>N</variation>
    <location>
        <position position="378"/>
    </location>
</feature>
<feature type="helix" evidence="23">
    <location>
        <begin position="26"/>
        <end position="28"/>
    </location>
</feature>
<feature type="helix" evidence="23">
    <location>
        <begin position="29"/>
        <end position="40"/>
    </location>
</feature>
<feature type="strand" evidence="25">
    <location>
        <begin position="42"/>
        <end position="44"/>
    </location>
</feature>
<feature type="helix" evidence="26">
    <location>
        <begin position="46"/>
        <end position="48"/>
    </location>
</feature>
<feature type="strand" evidence="23">
    <location>
        <begin position="52"/>
        <end position="56"/>
    </location>
</feature>
<feature type="strand" evidence="23">
    <location>
        <begin position="59"/>
        <end position="62"/>
    </location>
</feature>
<feature type="strand" evidence="23">
    <location>
        <begin position="65"/>
        <end position="69"/>
    </location>
</feature>
<feature type="helix" evidence="23">
    <location>
        <begin position="78"/>
        <end position="80"/>
    </location>
</feature>
<feature type="helix" evidence="23">
    <location>
        <begin position="82"/>
        <end position="95"/>
    </location>
</feature>
<feature type="turn" evidence="23">
    <location>
        <begin position="103"/>
        <end position="106"/>
    </location>
</feature>
<feature type="helix" evidence="23">
    <location>
        <begin position="110"/>
        <end position="123"/>
    </location>
</feature>
<feature type="strand" evidence="23">
    <location>
        <begin position="126"/>
        <end position="132"/>
    </location>
</feature>
<feature type="helix" evidence="23">
    <location>
        <begin position="134"/>
        <end position="145"/>
    </location>
</feature>
<feature type="strand" evidence="23">
    <location>
        <begin position="151"/>
        <end position="155"/>
    </location>
</feature>
<feature type="helix" evidence="23">
    <location>
        <begin position="160"/>
        <end position="168"/>
    </location>
</feature>
<feature type="strand" evidence="23">
    <location>
        <begin position="171"/>
        <end position="176"/>
    </location>
</feature>
<feature type="helix" evidence="23">
    <location>
        <begin position="181"/>
        <end position="189"/>
    </location>
</feature>
<feature type="strand" evidence="23">
    <location>
        <begin position="193"/>
        <end position="195"/>
    </location>
</feature>
<feature type="strand" evidence="23">
    <location>
        <begin position="197"/>
        <end position="205"/>
    </location>
</feature>
<feature type="turn" evidence="23">
    <location>
        <begin position="206"/>
        <end position="209"/>
    </location>
</feature>
<feature type="helix" evidence="23">
    <location>
        <begin position="214"/>
        <end position="223"/>
    </location>
</feature>
<feature type="strand" evidence="23">
    <location>
        <begin position="227"/>
        <end position="231"/>
    </location>
</feature>
<feature type="turn" evidence="23">
    <location>
        <begin position="233"/>
        <end position="238"/>
    </location>
</feature>
<feature type="helix" evidence="23">
    <location>
        <begin position="246"/>
        <end position="249"/>
    </location>
</feature>
<feature type="turn" evidence="25">
    <location>
        <begin position="253"/>
        <end position="255"/>
    </location>
</feature>
<feature type="strand" evidence="23">
    <location>
        <begin position="257"/>
        <end position="265"/>
    </location>
</feature>
<feature type="strand" evidence="24">
    <location>
        <begin position="268"/>
        <end position="270"/>
    </location>
</feature>
<feature type="strand" evidence="23">
    <location>
        <begin position="272"/>
        <end position="276"/>
    </location>
</feature>
<feature type="helix" evidence="23">
    <location>
        <begin position="281"/>
        <end position="286"/>
    </location>
</feature>
<feature type="helix" evidence="23">
    <location>
        <begin position="289"/>
        <end position="292"/>
    </location>
</feature>
<feature type="helix" evidence="23">
    <location>
        <begin position="299"/>
        <end position="312"/>
    </location>
</feature>
<feature type="helix" evidence="23">
    <location>
        <begin position="316"/>
        <end position="336"/>
    </location>
</feature>
<feature type="strand" evidence="23">
    <location>
        <begin position="339"/>
        <end position="341"/>
    </location>
</feature>
<feature type="strand" evidence="23">
    <location>
        <begin position="347"/>
        <end position="356"/>
    </location>
</feature>
<feature type="helix" evidence="23">
    <location>
        <begin position="357"/>
        <end position="369"/>
    </location>
</feature>
<feature type="strand" evidence="23">
    <location>
        <begin position="375"/>
        <end position="377"/>
    </location>
</feature>
<feature type="turn" evidence="23">
    <location>
        <begin position="379"/>
        <end position="381"/>
    </location>
</feature>
<feature type="strand" evidence="23">
    <location>
        <begin position="387"/>
        <end position="392"/>
    </location>
</feature>
<feature type="helix" evidence="23">
    <location>
        <begin position="399"/>
        <end position="416"/>
    </location>
</feature>
<proteinExistence type="evidence at protein level"/>
<accession>Q93UV0</accession>
<name>SPT_SPHPI</name>